<accession>Q9H714</accession>
<accession>A8KAG9</accession>
<accession>A8XR19</accession>
<accession>B3KS87</accession>
<accession>Q5W051</accession>
<accession>Q5W053</accession>
<accession>Q6PJ74</accession>
<accession>Q6PK94</accession>
<accession>Q86XH7</accession>
<accession>Q8N5J6</accession>
<gene>
    <name evidence="13" type="primary">RUBCNL</name>
    <name evidence="13" type="synonym">C13orf18</name>
    <name evidence="13" type="synonym">KIAA0226L</name>
</gene>
<reference key="1">
    <citation type="journal article" date="2004" name="Nat. Genet.">
        <title>Complete sequencing and characterization of 21,243 full-length human cDNAs.</title>
        <authorList>
            <person name="Ota T."/>
            <person name="Suzuki Y."/>
            <person name="Nishikawa T."/>
            <person name="Otsuki T."/>
            <person name="Sugiyama T."/>
            <person name="Irie R."/>
            <person name="Wakamatsu A."/>
            <person name="Hayashi K."/>
            <person name="Sato H."/>
            <person name="Nagai K."/>
            <person name="Kimura K."/>
            <person name="Makita H."/>
            <person name="Sekine M."/>
            <person name="Obayashi M."/>
            <person name="Nishi T."/>
            <person name="Shibahara T."/>
            <person name="Tanaka T."/>
            <person name="Ishii S."/>
            <person name="Yamamoto J."/>
            <person name="Saito K."/>
            <person name="Kawai Y."/>
            <person name="Isono Y."/>
            <person name="Nakamura Y."/>
            <person name="Nagahari K."/>
            <person name="Murakami K."/>
            <person name="Yasuda T."/>
            <person name="Iwayanagi T."/>
            <person name="Wagatsuma M."/>
            <person name="Shiratori A."/>
            <person name="Sudo H."/>
            <person name="Hosoiri T."/>
            <person name="Kaku Y."/>
            <person name="Kodaira H."/>
            <person name="Kondo H."/>
            <person name="Sugawara M."/>
            <person name="Takahashi M."/>
            <person name="Kanda K."/>
            <person name="Yokoi T."/>
            <person name="Furuya T."/>
            <person name="Kikkawa E."/>
            <person name="Omura Y."/>
            <person name="Abe K."/>
            <person name="Kamihara K."/>
            <person name="Katsuta N."/>
            <person name="Sato K."/>
            <person name="Tanikawa M."/>
            <person name="Yamazaki M."/>
            <person name="Ninomiya K."/>
            <person name="Ishibashi T."/>
            <person name="Yamashita H."/>
            <person name="Murakawa K."/>
            <person name="Fujimori K."/>
            <person name="Tanai H."/>
            <person name="Kimata M."/>
            <person name="Watanabe M."/>
            <person name="Hiraoka S."/>
            <person name="Chiba Y."/>
            <person name="Ishida S."/>
            <person name="Ono Y."/>
            <person name="Takiguchi S."/>
            <person name="Watanabe S."/>
            <person name="Yosida M."/>
            <person name="Hotuta T."/>
            <person name="Kusano J."/>
            <person name="Kanehori K."/>
            <person name="Takahashi-Fujii A."/>
            <person name="Hara H."/>
            <person name="Tanase T.-O."/>
            <person name="Nomura Y."/>
            <person name="Togiya S."/>
            <person name="Komai F."/>
            <person name="Hara R."/>
            <person name="Takeuchi K."/>
            <person name="Arita M."/>
            <person name="Imose N."/>
            <person name="Musashino K."/>
            <person name="Yuuki H."/>
            <person name="Oshima A."/>
            <person name="Sasaki N."/>
            <person name="Aotsuka S."/>
            <person name="Yoshikawa Y."/>
            <person name="Matsunawa H."/>
            <person name="Ichihara T."/>
            <person name="Shiohata N."/>
            <person name="Sano S."/>
            <person name="Moriya S."/>
            <person name="Momiyama H."/>
            <person name="Satoh N."/>
            <person name="Takami S."/>
            <person name="Terashima Y."/>
            <person name="Suzuki O."/>
            <person name="Nakagawa S."/>
            <person name="Senoh A."/>
            <person name="Mizoguchi H."/>
            <person name="Goto Y."/>
            <person name="Shimizu F."/>
            <person name="Wakebe H."/>
            <person name="Hishigaki H."/>
            <person name="Watanabe T."/>
            <person name="Sugiyama A."/>
            <person name="Takemoto M."/>
            <person name="Kawakami B."/>
            <person name="Yamazaki M."/>
            <person name="Watanabe K."/>
            <person name="Kumagai A."/>
            <person name="Itakura S."/>
            <person name="Fukuzumi Y."/>
            <person name="Fujimori Y."/>
            <person name="Komiyama M."/>
            <person name="Tashiro H."/>
            <person name="Tanigami A."/>
            <person name="Fujiwara T."/>
            <person name="Ono T."/>
            <person name="Yamada K."/>
            <person name="Fujii Y."/>
            <person name="Ozaki K."/>
            <person name="Hirao M."/>
            <person name="Ohmori Y."/>
            <person name="Kawabata A."/>
            <person name="Hikiji T."/>
            <person name="Kobatake N."/>
            <person name="Inagaki H."/>
            <person name="Ikema Y."/>
            <person name="Okamoto S."/>
            <person name="Okitani R."/>
            <person name="Kawakami T."/>
            <person name="Noguchi S."/>
            <person name="Itoh T."/>
            <person name="Shigeta K."/>
            <person name="Senba T."/>
            <person name="Matsumura K."/>
            <person name="Nakajima Y."/>
            <person name="Mizuno T."/>
            <person name="Morinaga M."/>
            <person name="Sasaki M."/>
            <person name="Togashi T."/>
            <person name="Oyama M."/>
            <person name="Hata H."/>
            <person name="Watanabe M."/>
            <person name="Komatsu T."/>
            <person name="Mizushima-Sugano J."/>
            <person name="Satoh T."/>
            <person name="Shirai Y."/>
            <person name="Takahashi Y."/>
            <person name="Nakagawa K."/>
            <person name="Okumura K."/>
            <person name="Nagase T."/>
            <person name="Nomura N."/>
            <person name="Kikuchi H."/>
            <person name="Masuho Y."/>
            <person name="Yamashita R."/>
            <person name="Nakai K."/>
            <person name="Yada T."/>
            <person name="Nakamura Y."/>
            <person name="Ohara O."/>
            <person name="Isogai T."/>
            <person name="Sugano S."/>
        </authorList>
    </citation>
    <scope>NUCLEOTIDE SEQUENCE [LARGE SCALE MRNA] (ISOFORMS 1; 5 AND 6)</scope>
    <scope>VARIANT ARG-152</scope>
    <source>
        <tissue>Colon</tissue>
        <tissue>Testis</tissue>
        <tissue>Uterus</tissue>
    </source>
</reference>
<reference key="2">
    <citation type="journal article" date="2004" name="Nature">
        <title>The DNA sequence and analysis of human chromosome 13.</title>
        <authorList>
            <person name="Dunham A."/>
            <person name="Matthews L.H."/>
            <person name="Burton J."/>
            <person name="Ashurst J.L."/>
            <person name="Howe K.L."/>
            <person name="Ashcroft K.J."/>
            <person name="Beare D.M."/>
            <person name="Burford D.C."/>
            <person name="Hunt S.E."/>
            <person name="Griffiths-Jones S."/>
            <person name="Jones M.C."/>
            <person name="Keenan S.J."/>
            <person name="Oliver K."/>
            <person name="Scott C.E."/>
            <person name="Ainscough R."/>
            <person name="Almeida J.P."/>
            <person name="Ambrose K.D."/>
            <person name="Andrews D.T."/>
            <person name="Ashwell R.I.S."/>
            <person name="Babbage A.K."/>
            <person name="Bagguley C.L."/>
            <person name="Bailey J."/>
            <person name="Bannerjee R."/>
            <person name="Barlow K.F."/>
            <person name="Bates K."/>
            <person name="Beasley H."/>
            <person name="Bird C.P."/>
            <person name="Bray-Allen S."/>
            <person name="Brown A.J."/>
            <person name="Brown J.Y."/>
            <person name="Burrill W."/>
            <person name="Carder C."/>
            <person name="Carter N.P."/>
            <person name="Chapman J.C."/>
            <person name="Clamp M.E."/>
            <person name="Clark S.Y."/>
            <person name="Clarke G."/>
            <person name="Clee C.M."/>
            <person name="Clegg S.C."/>
            <person name="Cobley V."/>
            <person name="Collins J.E."/>
            <person name="Corby N."/>
            <person name="Coville G.J."/>
            <person name="Deloukas P."/>
            <person name="Dhami P."/>
            <person name="Dunham I."/>
            <person name="Dunn M."/>
            <person name="Earthrowl M.E."/>
            <person name="Ellington A.G."/>
            <person name="Faulkner L."/>
            <person name="Frankish A.G."/>
            <person name="Frankland J."/>
            <person name="French L."/>
            <person name="Garner P."/>
            <person name="Garnett J."/>
            <person name="Gilbert J.G.R."/>
            <person name="Gilson C.J."/>
            <person name="Ghori J."/>
            <person name="Grafham D.V."/>
            <person name="Gribble S.M."/>
            <person name="Griffiths C."/>
            <person name="Hall R.E."/>
            <person name="Hammond S."/>
            <person name="Harley J.L."/>
            <person name="Hart E.A."/>
            <person name="Heath P.D."/>
            <person name="Howden P.J."/>
            <person name="Huckle E.J."/>
            <person name="Hunt P.J."/>
            <person name="Hunt A.R."/>
            <person name="Johnson C."/>
            <person name="Johnson D."/>
            <person name="Kay M."/>
            <person name="Kimberley A.M."/>
            <person name="King A."/>
            <person name="Laird G.K."/>
            <person name="Langford C.J."/>
            <person name="Lawlor S."/>
            <person name="Leongamornlert D.A."/>
            <person name="Lloyd D.M."/>
            <person name="Lloyd C."/>
            <person name="Loveland J.E."/>
            <person name="Lovell J."/>
            <person name="Martin S."/>
            <person name="Mashreghi-Mohammadi M."/>
            <person name="McLaren S.J."/>
            <person name="McMurray A."/>
            <person name="Milne S."/>
            <person name="Moore M.J.F."/>
            <person name="Nickerson T."/>
            <person name="Palmer S.A."/>
            <person name="Pearce A.V."/>
            <person name="Peck A.I."/>
            <person name="Pelan S."/>
            <person name="Phillimore B."/>
            <person name="Porter K.M."/>
            <person name="Rice C.M."/>
            <person name="Searle S."/>
            <person name="Sehra H.K."/>
            <person name="Shownkeen R."/>
            <person name="Skuce C.D."/>
            <person name="Smith M."/>
            <person name="Steward C.A."/>
            <person name="Sycamore N."/>
            <person name="Tester J."/>
            <person name="Thomas D.W."/>
            <person name="Tracey A."/>
            <person name="Tromans A."/>
            <person name="Tubby B."/>
            <person name="Wall M."/>
            <person name="Wallis J.M."/>
            <person name="West A.P."/>
            <person name="Whitehead S.L."/>
            <person name="Willey D.L."/>
            <person name="Wilming L."/>
            <person name="Wray P.W."/>
            <person name="Wright M.W."/>
            <person name="Young L."/>
            <person name="Coulson A."/>
            <person name="Durbin R.M."/>
            <person name="Hubbard T."/>
            <person name="Sulston J.E."/>
            <person name="Beck S."/>
            <person name="Bentley D.R."/>
            <person name="Rogers J."/>
            <person name="Ross M.T."/>
        </authorList>
    </citation>
    <scope>NUCLEOTIDE SEQUENCE [LARGE SCALE GENOMIC DNA]</scope>
</reference>
<reference key="3">
    <citation type="journal article" date="2004" name="Genome Res.">
        <title>The status, quality, and expansion of the NIH full-length cDNA project: the Mammalian Gene Collection (MGC).</title>
        <authorList>
            <consortium name="The MGC Project Team"/>
        </authorList>
    </citation>
    <scope>NUCLEOTIDE SEQUENCE [LARGE SCALE MRNA] (ISOFORMS 2; 3 AND 4)</scope>
    <scope>NUCLEOTIDE SEQUENCE [LARGE SCALE MRNA] OF 234-662 (ISOFORMS 1/2)</scope>
    <scope>VARIANT ARG-152</scope>
    <source>
        <tissue>B-cell</tissue>
        <tissue>Leukocyte</tissue>
        <tissue>Skin</tissue>
    </source>
</reference>
<reference key="4">
    <citation type="journal article" date="2009" name="Mol. Cell. Proteomics">
        <title>Large-scale proteomics analysis of the human kinome.</title>
        <authorList>
            <person name="Oppermann F.S."/>
            <person name="Gnad F."/>
            <person name="Olsen J.V."/>
            <person name="Hornberger R."/>
            <person name="Greff Z."/>
            <person name="Keri G."/>
            <person name="Mann M."/>
            <person name="Daub H."/>
        </authorList>
    </citation>
    <scope>IDENTIFICATION BY MASS SPECTROMETRY [LARGE SCALE ANALYSIS]</scope>
</reference>
<reference key="5">
    <citation type="journal article" date="2013" name="Mol. Oncol.">
        <title>Functional validation of putative tumor suppressor gene C13ORF18 in cervical cancer by artificial transcription factors.</title>
        <authorList>
            <person name="Huisman C."/>
            <person name="Wisman G.B."/>
            <person name="Kazemier H.G."/>
            <person name="van Vugt M.A."/>
            <person name="van der Zee A.G."/>
            <person name="Schuuring E."/>
            <person name="Rots M.G."/>
        </authorList>
    </citation>
    <scope>POSSIBLE FUNCTION</scope>
    <scope>INDUCTION</scope>
    <scope>TISSUE SPECIFICITY</scope>
</reference>
<reference key="6">
    <citation type="journal article" date="2017" name="Mol. Cell">
        <title>Pacer mediates the function of class III PI3K and HOPS complexes in autophagosome maturation by engaging Stx17.</title>
        <authorList>
            <person name="Cheng X."/>
            <person name="Ma X."/>
            <person name="Ding X."/>
            <person name="Li L."/>
            <person name="Jiang X."/>
            <person name="Shen Z."/>
            <person name="Chen S."/>
            <person name="Liu W."/>
            <person name="Gong W."/>
            <person name="Sun Q."/>
        </authorList>
    </citation>
    <scope>FUNCTION</scope>
    <scope>SUBCELLULAR LOCATION</scope>
    <scope>INTERACTION WITH UVRAG AND STX17</scope>
    <scope>LIPID-BINDING</scope>
    <scope>MUTAGENESIS OF 204-VAL--ASN-208</scope>
</reference>
<reference key="7">
    <citation type="journal article" date="2019" name="Mol. Cell">
        <title>Pacer is a mediator of mTORC1 and GSK3-TIP60 signaling in regulation of autophagosome maturation and lipid metabolism.</title>
        <authorList>
            <person name="Cheng X."/>
            <person name="Ma X."/>
            <person name="Zhu Q."/>
            <person name="Song D."/>
            <person name="Ding X."/>
            <person name="Li L."/>
            <person name="Jiang X."/>
            <person name="Wang X."/>
            <person name="Tian R."/>
            <person name="Su H."/>
            <person name="Shen Z."/>
            <person name="Chen S."/>
            <person name="Liu T."/>
            <person name="Gong W."/>
            <person name="Liu W."/>
            <person name="Sun Q."/>
        </authorList>
    </citation>
    <scope>FUNCTION</scope>
    <scope>INTERACTION WITH STX17</scope>
    <scope>PHOSPHORYLATION AT SER-157</scope>
    <scope>ACETYLATION AT LYS-483; LYS-523; LYS-533; LYS-573 AND LYS-633</scope>
    <scope>MUTAGENESIS OF SER-157; LYS-483; LYS-523; LYS-533; LYS-573 AND LYS-633</scope>
</reference>
<dbReference type="EMBL" id="AK025215">
    <property type="protein sequence ID" value="BAB15086.1"/>
    <property type="molecule type" value="mRNA"/>
</dbReference>
<dbReference type="EMBL" id="AK093073">
    <property type="protein sequence ID" value="BAG52649.1"/>
    <property type="molecule type" value="mRNA"/>
</dbReference>
<dbReference type="EMBL" id="AK293034">
    <property type="protein sequence ID" value="BAF85723.1"/>
    <property type="molecule type" value="mRNA"/>
</dbReference>
<dbReference type="EMBL" id="AL139801">
    <property type="status" value="NOT_ANNOTATED_CDS"/>
    <property type="molecule type" value="Genomic_DNA"/>
</dbReference>
<dbReference type="EMBL" id="BC004495">
    <property type="protein sequence ID" value="AAH04495.1"/>
    <property type="molecule type" value="mRNA"/>
</dbReference>
<dbReference type="EMBL" id="BC021097">
    <property type="status" value="NOT_ANNOTATED_CDS"/>
    <property type="molecule type" value="mRNA"/>
</dbReference>
<dbReference type="EMBL" id="BC032311">
    <property type="status" value="NOT_ANNOTATED_CDS"/>
    <property type="molecule type" value="mRNA"/>
</dbReference>
<dbReference type="EMBL" id="BC043488">
    <property type="protein sequence ID" value="AAH43488.1"/>
    <property type="molecule type" value="mRNA"/>
</dbReference>
<dbReference type="CCDS" id="CCDS31970.2">
    <molecule id="Q9H714-5"/>
</dbReference>
<dbReference type="CCDS" id="CCDS66542.1">
    <molecule id="Q9H714-6"/>
</dbReference>
<dbReference type="CCDS" id="CCDS66543.1">
    <molecule id="Q9H714-4"/>
</dbReference>
<dbReference type="CCDS" id="CCDS66545.1">
    <molecule id="Q9H714-3"/>
</dbReference>
<dbReference type="RefSeq" id="NP_001273690.1">
    <molecule id="Q9H714-5"/>
    <property type="nucleotide sequence ID" value="NM_001286761.2"/>
</dbReference>
<dbReference type="RefSeq" id="NP_001273691.1">
    <molecule id="Q9H714-4"/>
    <property type="nucleotide sequence ID" value="NM_001286762.3"/>
</dbReference>
<dbReference type="RefSeq" id="NP_001273692.1">
    <molecule id="Q9H714-3"/>
    <property type="nucleotide sequence ID" value="NM_001286763.3"/>
</dbReference>
<dbReference type="RefSeq" id="NP_001273693.1">
    <molecule id="Q9H714-6"/>
    <property type="nucleotide sequence ID" value="NM_001286764.3"/>
</dbReference>
<dbReference type="RefSeq" id="NP_001336701.1">
    <molecule id="Q9H714-5"/>
    <property type="nucleotide sequence ID" value="NM_001349772.2"/>
</dbReference>
<dbReference type="RefSeq" id="NP_079389.2">
    <molecule id="Q9H714-5"/>
    <property type="nucleotide sequence ID" value="NM_025113.5"/>
</dbReference>
<dbReference type="SMR" id="Q9H714"/>
<dbReference type="BioGRID" id="123162">
    <property type="interactions" value="11"/>
</dbReference>
<dbReference type="FunCoup" id="Q9H714">
    <property type="interactions" value="564"/>
</dbReference>
<dbReference type="IntAct" id="Q9H714">
    <property type="interactions" value="10"/>
</dbReference>
<dbReference type="STRING" id="9606.ENSP00000396935"/>
<dbReference type="iPTMnet" id="Q9H714"/>
<dbReference type="PhosphoSitePlus" id="Q9H714"/>
<dbReference type="BioMuta" id="RUBCNL"/>
<dbReference type="DMDM" id="206729926"/>
<dbReference type="jPOST" id="Q9H714"/>
<dbReference type="MassIVE" id="Q9H714"/>
<dbReference type="PaxDb" id="9606-ENSP00000396935"/>
<dbReference type="PeptideAtlas" id="Q9H714"/>
<dbReference type="ProteomicsDB" id="1901"/>
<dbReference type="ProteomicsDB" id="81072">
    <molecule id="Q9H714-5"/>
</dbReference>
<dbReference type="ProteomicsDB" id="81073">
    <molecule id="Q9H714-1"/>
</dbReference>
<dbReference type="ProteomicsDB" id="81074">
    <molecule id="Q9H714-2"/>
</dbReference>
<dbReference type="ProteomicsDB" id="81075">
    <molecule id="Q9H714-3"/>
</dbReference>
<dbReference type="ProteomicsDB" id="81076">
    <molecule id="Q9H714-4"/>
</dbReference>
<dbReference type="Antibodypedia" id="23706">
    <property type="antibodies" value="147 antibodies from 20 providers"/>
</dbReference>
<dbReference type="DNASU" id="80183"/>
<dbReference type="Ensembl" id="ENST00000378784.8">
    <molecule id="Q9H714-3"/>
    <property type="protein sequence ID" value="ENSP00000368061.4"/>
    <property type="gene ID" value="ENSG00000102445.20"/>
</dbReference>
<dbReference type="Ensembl" id="ENST00000378787.7">
    <molecule id="Q9H714-4"/>
    <property type="protein sequence ID" value="ENSP00000368064.3"/>
    <property type="gene ID" value="ENSG00000102445.20"/>
</dbReference>
<dbReference type="Ensembl" id="ENST00000389908.7">
    <molecule id="Q9H714-5"/>
    <property type="protein sequence ID" value="ENSP00000374558.3"/>
    <property type="gene ID" value="ENSG00000102445.20"/>
</dbReference>
<dbReference type="Ensembl" id="ENST00000417405.2">
    <molecule id="Q9H714-4"/>
    <property type="protein sequence ID" value="ENSP00000402357.2"/>
    <property type="gene ID" value="ENSG00000102445.20"/>
</dbReference>
<dbReference type="Ensembl" id="ENST00000429979.6">
    <molecule id="Q9H714-5"/>
    <property type="protein sequence ID" value="ENSP00000396935.1"/>
    <property type="gene ID" value="ENSG00000102445.20"/>
</dbReference>
<dbReference type="Ensembl" id="ENST00000631139.2">
    <molecule id="Q9H714-6"/>
    <property type="protein sequence ID" value="ENSP00000485932.1"/>
    <property type="gene ID" value="ENSG00000102445.20"/>
</dbReference>
<dbReference type="Ensembl" id="ENST00000676051.1">
    <molecule id="Q9H714-6"/>
    <property type="protein sequence ID" value="ENSP00000501843.1"/>
    <property type="gene ID" value="ENSG00000102445.20"/>
</dbReference>
<dbReference type="Ensembl" id="ENST00000676114.1">
    <molecule id="Q9H714-5"/>
    <property type="protein sequence ID" value="ENSP00000502252.1"/>
    <property type="gene ID" value="ENSG00000102445.20"/>
</dbReference>
<dbReference type="Ensembl" id="ENST00000676307.1">
    <molecule id="Q9H714-5"/>
    <property type="protein sequence ID" value="ENSP00000502015.1"/>
    <property type="gene ID" value="ENSG00000102445.20"/>
</dbReference>
<dbReference type="GeneID" id="80183"/>
<dbReference type="KEGG" id="hsa:80183"/>
<dbReference type="MANE-Select" id="ENST00000429979.6">
    <property type="protein sequence ID" value="ENSP00000396935.1"/>
    <property type="RefSeq nucleotide sequence ID" value="NM_025113.5"/>
    <property type="RefSeq protein sequence ID" value="NP_079389.2"/>
</dbReference>
<dbReference type="UCSC" id="uc001vbe.6">
    <molecule id="Q9H714-5"/>
    <property type="organism name" value="human"/>
</dbReference>
<dbReference type="AGR" id="HGNC:20420"/>
<dbReference type="CTD" id="80183"/>
<dbReference type="DisGeNET" id="80183"/>
<dbReference type="GeneCards" id="RUBCNL"/>
<dbReference type="HGNC" id="HGNC:20420">
    <property type="gene designation" value="RUBCNL"/>
</dbReference>
<dbReference type="HPA" id="ENSG00000102445">
    <property type="expression patterns" value="Tissue enhanced (lymphoid)"/>
</dbReference>
<dbReference type="MIM" id="620175">
    <property type="type" value="gene"/>
</dbReference>
<dbReference type="neXtProt" id="NX_Q9H714"/>
<dbReference type="OpenTargets" id="ENSG00000102445"/>
<dbReference type="PharmGKB" id="PA134942431"/>
<dbReference type="VEuPathDB" id="HostDB:ENSG00000102445"/>
<dbReference type="eggNOG" id="KOG1829">
    <property type="taxonomic scope" value="Eukaryota"/>
</dbReference>
<dbReference type="GeneTree" id="ENSGT00940000160585"/>
<dbReference type="InParanoid" id="Q9H714"/>
<dbReference type="OMA" id="ILTMWDF"/>
<dbReference type="OrthoDB" id="10067503at2759"/>
<dbReference type="PAN-GO" id="Q9H714">
    <property type="GO annotations" value="6 GO annotations based on evolutionary models"/>
</dbReference>
<dbReference type="PhylomeDB" id="Q9H714"/>
<dbReference type="TreeFam" id="TF317067"/>
<dbReference type="PathwayCommons" id="Q9H714"/>
<dbReference type="SignaLink" id="Q9H714"/>
<dbReference type="SIGNOR" id="Q9H714"/>
<dbReference type="BioGRID-ORCS" id="80183">
    <property type="hits" value="12 hits in 1152 CRISPR screens"/>
</dbReference>
<dbReference type="ChiTaRS" id="RUBCNL">
    <property type="organism name" value="human"/>
</dbReference>
<dbReference type="GenomeRNAi" id="80183"/>
<dbReference type="Pharos" id="Q9H714">
    <property type="development level" value="Tbio"/>
</dbReference>
<dbReference type="PRO" id="PR:Q9H714"/>
<dbReference type="Proteomes" id="UP000005640">
    <property type="component" value="Chromosome 13"/>
</dbReference>
<dbReference type="RNAct" id="Q9H714">
    <property type="molecule type" value="protein"/>
</dbReference>
<dbReference type="Bgee" id="ENSG00000102445">
    <property type="expression patterns" value="Expressed in periodontal ligament and 159 other cell types or tissues"/>
</dbReference>
<dbReference type="ExpressionAtlas" id="Q9H714">
    <property type="expression patterns" value="baseline and differential"/>
</dbReference>
<dbReference type="GO" id="GO:0000421">
    <property type="term" value="C:autophagosome membrane"/>
    <property type="evidence" value="ECO:0000314"/>
    <property type="project" value="UniProtKB"/>
</dbReference>
<dbReference type="GO" id="GO:0031410">
    <property type="term" value="C:cytoplasmic vesicle"/>
    <property type="evidence" value="ECO:0007669"/>
    <property type="project" value="UniProtKB-KW"/>
</dbReference>
<dbReference type="GO" id="GO:0043231">
    <property type="term" value="C:intracellular membrane-bounded organelle"/>
    <property type="evidence" value="ECO:0000318"/>
    <property type="project" value="GO_Central"/>
</dbReference>
<dbReference type="GO" id="GO:1901981">
    <property type="term" value="F:phosphatidylinositol phosphate binding"/>
    <property type="evidence" value="ECO:0000318"/>
    <property type="project" value="GO_Central"/>
</dbReference>
<dbReference type="GO" id="GO:0032266">
    <property type="term" value="F:phosphatidylinositol-3-phosphate binding"/>
    <property type="evidence" value="ECO:0000314"/>
    <property type="project" value="UniProtKB"/>
</dbReference>
<dbReference type="GO" id="GO:0070273">
    <property type="term" value="F:phosphatidylinositol-4-phosphate binding"/>
    <property type="evidence" value="ECO:0000314"/>
    <property type="project" value="UniProtKB"/>
</dbReference>
<dbReference type="GO" id="GO:0010314">
    <property type="term" value="F:phosphatidylinositol-5-phosphate binding"/>
    <property type="evidence" value="ECO:0000314"/>
    <property type="project" value="UniProtKB"/>
</dbReference>
<dbReference type="GO" id="GO:0097352">
    <property type="term" value="P:autophagosome maturation"/>
    <property type="evidence" value="ECO:0000314"/>
    <property type="project" value="UniProtKB"/>
</dbReference>
<dbReference type="GO" id="GO:0061910">
    <property type="term" value="P:autophagosome-endosome fusion"/>
    <property type="evidence" value="ECO:0000314"/>
    <property type="project" value="UniProtKB"/>
</dbReference>
<dbReference type="GO" id="GO:0061909">
    <property type="term" value="P:autophagosome-lysosome fusion"/>
    <property type="evidence" value="ECO:0000314"/>
    <property type="project" value="UniProtKB"/>
</dbReference>
<dbReference type="GO" id="GO:0006629">
    <property type="term" value="P:lipid metabolic process"/>
    <property type="evidence" value="ECO:0007669"/>
    <property type="project" value="UniProtKB-KW"/>
</dbReference>
<dbReference type="GO" id="GO:0070873">
    <property type="term" value="P:regulation of glycogen metabolic process"/>
    <property type="evidence" value="ECO:0000250"/>
    <property type="project" value="UniProtKB"/>
</dbReference>
<dbReference type="GO" id="GO:0019216">
    <property type="term" value="P:regulation of lipid metabolic process"/>
    <property type="evidence" value="ECO:0000250"/>
    <property type="project" value="UniProtKB"/>
</dbReference>
<dbReference type="InterPro" id="IPR052428">
    <property type="entry name" value="Autophagy_HostDef_Reg"/>
</dbReference>
<dbReference type="InterPro" id="IPR025258">
    <property type="entry name" value="RH_dom"/>
</dbReference>
<dbReference type="InterPro" id="IPR048569">
    <property type="entry name" value="RUBC_PIKBD"/>
</dbReference>
<dbReference type="PANTHER" id="PTHR45971">
    <property type="entry name" value="PHOX (PX) DOMAIN-CONTAINING PROTEIN"/>
    <property type="match status" value="1"/>
</dbReference>
<dbReference type="PANTHER" id="PTHR45971:SF2">
    <property type="entry name" value="PROTEIN ASSOCIATED WITH UVRAG AS AUTOPHAGY ENHANCER"/>
    <property type="match status" value="1"/>
</dbReference>
<dbReference type="Pfam" id="PF13901">
    <property type="entry name" value="RH_dom"/>
    <property type="match status" value="1"/>
</dbReference>
<dbReference type="Pfam" id="PF21054">
    <property type="entry name" value="RUBC_PIKBD"/>
    <property type="match status" value="1"/>
</dbReference>
<dbReference type="SMART" id="SM01175">
    <property type="entry name" value="DUF4206"/>
    <property type="match status" value="1"/>
</dbReference>
<evidence type="ECO:0000250" key="1">
    <source>
        <dbReference type="UniProtKB" id="Q3TD16"/>
    </source>
</evidence>
<evidence type="ECO:0000256" key="2">
    <source>
        <dbReference type="SAM" id="MobiDB-lite"/>
    </source>
</evidence>
<evidence type="ECO:0000269" key="3">
    <source>
    </source>
</evidence>
<evidence type="ECO:0000269" key="4">
    <source>
    </source>
</evidence>
<evidence type="ECO:0000269" key="5">
    <source>
    </source>
</evidence>
<evidence type="ECO:0000269" key="6">
    <source>
    </source>
</evidence>
<evidence type="ECO:0000269" key="7">
    <source>
    </source>
</evidence>
<evidence type="ECO:0000303" key="8">
    <source>
    </source>
</evidence>
<evidence type="ECO:0000303" key="9">
    <source>
    </source>
</evidence>
<evidence type="ECO:0000303" key="10">
    <source>
    </source>
</evidence>
<evidence type="ECO:0000305" key="11"/>
<evidence type="ECO:0000305" key="12">
    <source>
    </source>
</evidence>
<evidence type="ECO:0000312" key="13">
    <source>
        <dbReference type="HGNC" id="HGNC:20420"/>
    </source>
</evidence>
<proteinExistence type="evidence at protein level"/>
<organism>
    <name type="scientific">Homo sapiens</name>
    <name type="common">Human</name>
    <dbReference type="NCBI Taxonomy" id="9606"/>
    <lineage>
        <taxon>Eukaryota</taxon>
        <taxon>Metazoa</taxon>
        <taxon>Chordata</taxon>
        <taxon>Craniata</taxon>
        <taxon>Vertebrata</taxon>
        <taxon>Euteleostomi</taxon>
        <taxon>Mammalia</taxon>
        <taxon>Eutheria</taxon>
        <taxon>Euarchontoglires</taxon>
        <taxon>Primates</taxon>
        <taxon>Haplorrhini</taxon>
        <taxon>Catarrhini</taxon>
        <taxon>Hominidae</taxon>
        <taxon>Homo</taxon>
    </lineage>
</organism>
<feature type="chain" id="PRO_0000089880" description="Protein associated with UVRAG as autophagy enhancer">
    <location>
        <begin position="1"/>
        <end position="662"/>
    </location>
</feature>
<feature type="region of interest" description="Disordered" evidence="2">
    <location>
        <begin position="1"/>
        <end position="34"/>
    </location>
</feature>
<feature type="region of interest" description="Disordered" evidence="2">
    <location>
        <begin position="58"/>
        <end position="131"/>
    </location>
</feature>
<feature type="region of interest" description="Interaction with UVRAG" evidence="6">
    <location>
        <begin position="196"/>
        <end position="235"/>
    </location>
</feature>
<feature type="compositionally biased region" description="Low complexity" evidence="2">
    <location>
        <begin position="58"/>
        <end position="71"/>
    </location>
</feature>
<feature type="compositionally biased region" description="Polar residues" evidence="2">
    <location>
        <begin position="100"/>
        <end position="113"/>
    </location>
</feature>
<feature type="compositionally biased region" description="Low complexity" evidence="2">
    <location>
        <begin position="114"/>
        <end position="131"/>
    </location>
</feature>
<feature type="modified residue" description="Phosphoserine; by MTOR" evidence="7">
    <location>
        <position position="157"/>
    </location>
</feature>
<feature type="modified residue" description="N6-acetyllysine" evidence="7">
    <location>
        <position position="483"/>
    </location>
</feature>
<feature type="modified residue" description="N6-acetyllysine" evidence="7">
    <location>
        <position position="523"/>
    </location>
</feature>
<feature type="modified residue" description="N6-acetyllysine" evidence="7">
    <location>
        <position position="533"/>
    </location>
</feature>
<feature type="modified residue" description="N6-acetyllysine" evidence="7">
    <location>
        <position position="573"/>
    </location>
</feature>
<feature type="modified residue" description="N6-acetyllysine" evidence="7">
    <location>
        <position position="633"/>
    </location>
</feature>
<feature type="splice variant" id="VSP_055260" description="In isoform 6." evidence="8">
    <location>
        <begin position="1"/>
        <end position="135"/>
    </location>
</feature>
<feature type="splice variant" id="VSP_014708" description="In isoform 2." evidence="9">
    <original>MVSQSTVRQDSPVEPWEGISDHSGIIDGSPRLLNTDHPPCQLDIRLMRHKAVWINPQDVQQQPQDLQSQVPAAGNSGTHFVTDAASPS</original>
    <variation>MVSNHYFLLCVNLPLREIHTP</variation>
    <location>
        <begin position="1"/>
        <end position="88"/>
    </location>
</feature>
<feature type="splice variant" id="VSP_014709" description="In isoform 4." evidence="9">
    <original>MVRPGYSHRVSL</original>
    <variation>KACMRKPRSWTE</variation>
    <location>
        <begin position="136"/>
        <end position="147"/>
    </location>
</feature>
<feature type="splice variant" id="VSP_014710" description="In isoform 4." evidence="9">
    <location>
        <begin position="148"/>
        <end position="662"/>
    </location>
</feature>
<feature type="splice variant" id="VSP_014711" description="In isoform 3." evidence="9">
    <original>ELGDFNDITETCS</original>
    <variation>VSLMSQTSILQNY</variation>
    <location>
        <begin position="309"/>
        <end position="321"/>
    </location>
</feature>
<feature type="splice variant" id="VSP_014712" description="In isoform 3." evidence="9">
    <location>
        <begin position="322"/>
        <end position="662"/>
    </location>
</feature>
<feature type="splice variant" id="VSP_014713" description="In isoform 5." evidence="8">
    <original>ALKEFEQVPGHLTDELHLFSLEDLVRIKKGLLAPLLKDILKASLAHVAGCELCQGKGFICEFCQNTTVIFPFQTATCRRCSACRACFHKQCFQSSECPRCARITARRKLLESVASAAT</original>
    <variation>CVKERALFVNFARIRLSSSHFRQQHVEDVQRAGLAFTNSASSPPSAPGVRGSQRGENFWKVWPLQQHDAPEYCEKDCSTCLMITPICVYYW</variation>
    <location>
        <begin position="545"/>
        <end position="662"/>
    </location>
</feature>
<feature type="sequence variant" id="VAR_022912" description="In dbSNP:rs1408184." evidence="3 4">
    <original>G</original>
    <variation>R</variation>
    <location>
        <position position="152"/>
    </location>
</feature>
<feature type="mutagenesis site" description="Abolished phosphorylation by MTOR, leading to promote interaction with STX17 and autophagosome maturation." evidence="7">
    <original>S</original>
    <variation>A</variation>
    <location>
        <position position="157"/>
    </location>
</feature>
<feature type="mutagenesis site" description="Phosphomimetic mutant; impaired interaction with STX17 and abolished ability to promote autophagosome maturation." evidence="7">
    <original>S</original>
    <variation>D</variation>
    <location>
        <position position="157"/>
    </location>
</feature>
<feature type="mutagenesis site" description="Abolishes interaction with UVRAG." evidence="6">
    <original>VEKEN</original>
    <variation>AAAAA</variation>
    <location>
        <begin position="204"/>
        <end position="208"/>
    </location>
</feature>
<feature type="mutagenesis site" description="Abolished acetylation by KAT5/TIP60 and abolished ability to promote autophagosome maturation; when associated with R-523, R-533, R-573 and R-633.">
    <original>K</original>
    <variation>R</variation>
    <location>
        <position position="483"/>
    </location>
</feature>
<feature type="mutagenesis site" description="Abolished acetylation by KAT5/TIP60 and abolished ability to promote autophagosome maturation; when associated with R-483, R-533, R-573 and R-633.">
    <original>K</original>
    <variation>R</variation>
    <location>
        <position position="523"/>
    </location>
</feature>
<feature type="mutagenesis site" description="Abolished acetylation by KAT5/TIP60 and abolished ability to promote autophagosome maturation; when associated with R-483, R-523, R-573 and R-633.">
    <original>K</original>
    <variation>R</variation>
    <location>
        <position position="533"/>
    </location>
</feature>
<feature type="mutagenesis site" description="Abolished acetylation by KAT5/TIP60 and abolished ability to promote autophagosome maturation; when associated with R-483, R-523, R-533 and R-633.">
    <original>K</original>
    <variation>R</variation>
    <location>
        <position position="573"/>
    </location>
</feature>
<feature type="mutagenesis site" description="Abolished acetylation by KAT5/TIP60 and abolished ability to promote autophagosome maturation; when associated with R-483, R-523, R-533 and R-573.">
    <original>K</original>
    <variation>R</variation>
    <location>
        <position position="633"/>
    </location>
</feature>
<feature type="sequence conflict" description="In Ref. 3; AAH04495." evidence="11" ref="3">
    <original>TES</original>
    <variation>ARG</variation>
    <location>
        <begin position="234"/>
        <end position="236"/>
    </location>
</feature>
<feature type="sequence conflict" description="In Ref. 1; BAG52649." evidence="11" ref="1">
    <original>S</original>
    <variation>P</variation>
    <location>
        <position position="469"/>
    </location>
</feature>
<feature type="sequence conflict" description="In Ref. 1; BAG52649." evidence="11" ref="1">
    <original>F</original>
    <variation>L</variation>
    <location>
        <position position="549"/>
    </location>
</feature>
<comment type="function">
    <text evidence="1 6 7 12">Regulator of autophagy that promotes autophagosome maturation by facilitating the biogenesis of phosphatidylinositol 3-phosphate (PtdIns(3)P) in late steps of autophagy (PubMed:28306502, PubMed:30704899). Acts by antagonizing RUBCN, thereby stimulating phosphatidylinositol 3-kinase activity of the PI3K/PI3KC3 complex (PubMed:28306502). Following anchorage to the autophagosomal SNARE STX17, promotes the recruitment of PI3K/PI3KC3 and HOPS complexes to the autophagosome to regulate the fusion specificity of autophagosomes with late endosomes/lysosomes (PubMed:28306502). Binds phosphoinositides phosphatidylinositol 3-phosphate (PtdIns(3)P), 4-phosphate (PtdIns(4)P) and 5-phosphate (PtdIns(5)P) (PubMed:28306502). In addition to its role in autophagy, acts as a regulator of lipid and glycogen homeostasis (By similarity). May act as a tumor suppressor (Probable).</text>
</comment>
<comment type="subunit">
    <text evidence="6 7">Interacts with UVRAG; the interaction is direct and promotes association with the PI3K/PI3KC3 and HOPS complexes (PubMed:28306502). Interacts with STX17 (PubMed:28306502, PubMed:30704899).</text>
</comment>
<comment type="interaction">
    <interactant intactId="EBI-9088146">
        <id>Q9H714-3</id>
    </interactant>
    <interactant intactId="EBI-949378">
        <id>Q14457</id>
        <label>BECN1</label>
    </interactant>
    <organismsDiffer>false</organismsDiffer>
    <experiments>3</experiments>
</comment>
<comment type="interaction">
    <interactant intactId="EBI-9088146">
        <id>Q9H714-3</id>
    </interactant>
    <interactant intactId="EBI-12192715">
        <id>Q96T51-2</id>
        <label>RUFY1</label>
    </interactant>
    <organismsDiffer>false</organismsDiffer>
    <experiments>2</experiments>
</comment>
<comment type="subcellular location">
    <subcellularLocation>
        <location evidence="6">Cytoplasmic vesicle</location>
        <location evidence="6">Autophagosome membrane</location>
        <topology evidence="6">Peripheral membrane protein</topology>
    </subcellularLocation>
    <text evidence="6">Associates with late autophagic structure (PubMed:28306502). Recruitment to autophagosome membrane is promoted by autophagic stimuli (PubMed:28306502).</text>
</comment>
<comment type="alternative products">
    <event type="alternative splicing"/>
    <isoform>
        <id>Q9H714-5</id>
        <name>1</name>
        <sequence type="displayed"/>
    </isoform>
    <isoform>
        <id>Q9H714-4</id>
        <name>5</name>
        <sequence type="described" ref="VSP_014713"/>
    </isoform>
    <isoform>
        <id>Q9H714-3</id>
        <name>2</name>
        <sequence type="described" ref="VSP_014708"/>
    </isoform>
    <isoform>
        <id>Q9H714-1</id>
        <name>3</name>
        <sequence type="described" ref="VSP_014711 VSP_014712"/>
    </isoform>
    <isoform>
        <id>Q9H714-2</id>
        <name>4</name>
        <sequence type="described" ref="VSP_014709 VSP_014710"/>
    </isoform>
    <isoform>
        <id>Q9H714-6</id>
        <name>6</name>
        <sequence type="described" ref="VSP_055260"/>
    </isoform>
</comment>
<comment type="tissue specificity">
    <text evidence="5">Expressed weakly in cervical carcinoma cell lines.</text>
</comment>
<comment type="induction">
    <text evidence="5">Up-regulated by epigenetic drugs, such as azacitidine, and artificial transcription factors (ATFs)-induced treatments in cervical carcinoma cell lines.</text>
</comment>
<comment type="PTM">
    <text evidence="7">Phosphorylated by MTOR at Ser-157 under nutrient-rich conditions (PubMed:30704899). Phosphorylation prevents acetylation by KAT5/TIP60 and impairs RUBCNL/PACER function and autophagosome maturation (PubMed:30704899). Under autophagy induction, Phosphorylation by MTOR is repressed, enabling acetylation by KAT5/TIP60 (PubMed:30704899).</text>
</comment>
<comment type="PTM">
    <text evidence="7">Acetylated by KAT5/TIP60 under autophagy induction, promoting autophagosome maturation and lipid metabolism (PubMed:30704899). Acetylation is prevented by phosphorylation by MTOR (PubMed:30704899). Lys-483 and Lys-573 constitute the key sites for tuning function in autophagy (PubMed:30704899).</text>
</comment>
<comment type="miscellaneous">
    <molecule>Isoform 3</molecule>
    <text evidence="11">May be produced at very low levels due to a premature stop codon in the mRNA, leading to nonsense-mediated mRNA decay.</text>
</comment>
<comment type="miscellaneous">
    <molecule>Isoform 4</molecule>
    <text evidence="11">May be produced at very low levels due to a premature stop codon in the mRNA, leading to nonsense-mediated mRNA decay.</text>
</comment>
<protein>
    <recommendedName>
        <fullName evidence="10">Protein associated with UVRAG as autophagy enhancer</fullName>
        <shortName evidence="10">Pacer</shortName>
    </recommendedName>
    <alternativeName>
        <fullName evidence="11">Protein Rubicon-like</fullName>
    </alternativeName>
</protein>
<sequence>MVSQSTVRQDSPVEPWEGISDHSGIIDGSPRLLNTDHPPCQLDIRLMRHKAVWINPQDVQQQPQDLQSQVPAAGNSGTHFVTDAASPSGPSPSCLGDSLAETTLSEDTTDSVGSASPHGSSEKSSSFSLSSTEVHMVRPGYSHRVSLPTSPGILATSPYPETDSAFFEPSHLTSAADEGAVQVSRRTISSNSFSPEVFVLPVDVEKENAHFYVADMIISAMEKMKCNILSQQQTESWSKEVSGLLGSDQPDSEMTFDTNIKQESGSSTSSYSGYEGCAVLQVSPVTETRTYHDVKEICKCDVDEFVILELGDFNDITETCSCSCSSSKSVTYEPDFNSAELLAKELYRVFQKCWILSVVNSQLAGSLSAAGSIVVNEECVRKDFESSMNVVQEIKFKSRIRGTEDWAPPRFQIIFNIHPPLKRDLVVAAQNFFCAGCGTPVEPKFVKRLRYCEYLGKYFCDCCHSYAESCIPARILMMWDFKKYYVSNFSKQLLDSIWHQPIFNLLSIGQSLYAKAKELDRVKEIQEQLFHIKKLLKTCRFANSALKEFEQVPGHLTDELHLFSLEDLVRIKKGLLAPLLKDILKASLAHVAGCELCQGKGFICEFCQNTTVIFPFQTATCRRCSACRACFHKQCFQSSECPRCARITARRKLLESVASAAT</sequence>
<name>PACER_HUMAN</name>
<keyword id="KW-0007">Acetylation</keyword>
<keyword id="KW-0025">Alternative splicing</keyword>
<keyword id="KW-0072">Autophagy</keyword>
<keyword id="KW-0968">Cytoplasmic vesicle</keyword>
<keyword id="KW-0443">Lipid metabolism</keyword>
<keyword id="KW-0446">Lipid-binding</keyword>
<keyword id="KW-0472">Membrane</keyword>
<keyword id="KW-0597">Phosphoprotein</keyword>
<keyword id="KW-1267">Proteomics identification</keyword>
<keyword id="KW-1185">Reference proteome</keyword>